<protein>
    <recommendedName>
        <fullName evidence="6">Carboxypeptidase Y homolog ARB_06361</fullName>
        <ecNumber evidence="1">3.4.16.5</ecNumber>
    </recommendedName>
    <alternativeName>
        <fullName evidence="6">Serine carboxypeptidase ARB_06361</fullName>
    </alternativeName>
</protein>
<name>SCPC_ARTBC</name>
<reference key="1">
    <citation type="journal article" date="2011" name="Genome Biol.">
        <title>Comparative and functional genomics provide insights into the pathogenicity of dermatophytic fungi.</title>
        <authorList>
            <person name="Burmester A."/>
            <person name="Shelest E."/>
            <person name="Gloeckner G."/>
            <person name="Heddergott C."/>
            <person name="Schindler S."/>
            <person name="Staib P."/>
            <person name="Heidel A."/>
            <person name="Felder M."/>
            <person name="Petzold A."/>
            <person name="Szafranski K."/>
            <person name="Feuermann M."/>
            <person name="Pedruzzi I."/>
            <person name="Priebe S."/>
            <person name="Groth M."/>
            <person name="Winkler R."/>
            <person name="Li W."/>
            <person name="Kniemeyer O."/>
            <person name="Schroeckh V."/>
            <person name="Hertweck C."/>
            <person name="Hube B."/>
            <person name="White T.C."/>
            <person name="Platzer M."/>
            <person name="Guthke R."/>
            <person name="Heitman J."/>
            <person name="Woestemeyer J."/>
            <person name="Zipfel P.F."/>
            <person name="Monod M."/>
            <person name="Brakhage A.A."/>
        </authorList>
    </citation>
    <scope>NUCLEOTIDE SEQUENCE [LARGE SCALE GENOMIC DNA]</scope>
    <source>
        <strain>ATCC MYA-4681 / CBS 112371</strain>
    </source>
</reference>
<reference key="2">
    <citation type="journal article" date="2011" name="Proteomics">
        <title>Identification of novel secreted proteases during extracellular proteolysis by dermatophytes at acidic pH.</title>
        <authorList>
            <person name="Sriranganadane D."/>
            <person name="Waridel P."/>
            <person name="Salamin K."/>
            <person name="Feuermann M."/>
            <person name="Mignon B."/>
            <person name="Staib P."/>
            <person name="Neuhaus J.M."/>
            <person name="Quadroni M."/>
            <person name="Monod M."/>
        </authorList>
    </citation>
    <scope>IDENTIFICATION BY MASS SPECTROMETRY</scope>
    <scope>SUBCELLULAR LOCATION</scope>
</reference>
<accession>D4AQ54</accession>
<organism>
    <name type="scientific">Arthroderma benhamiae (strain ATCC MYA-4681 / CBS 112371)</name>
    <name type="common">Trichophyton mentagrophytes</name>
    <dbReference type="NCBI Taxonomy" id="663331"/>
    <lineage>
        <taxon>Eukaryota</taxon>
        <taxon>Fungi</taxon>
        <taxon>Dikarya</taxon>
        <taxon>Ascomycota</taxon>
        <taxon>Pezizomycotina</taxon>
        <taxon>Eurotiomycetes</taxon>
        <taxon>Eurotiomycetidae</taxon>
        <taxon>Onygenales</taxon>
        <taxon>Arthrodermataceae</taxon>
        <taxon>Trichophyton</taxon>
    </lineage>
</organism>
<keyword id="KW-0121">Carboxypeptidase</keyword>
<keyword id="KW-1015">Disulfide bond</keyword>
<keyword id="KW-0325">Glycoprotein</keyword>
<keyword id="KW-0378">Hydrolase</keyword>
<keyword id="KW-0645">Protease</keyword>
<keyword id="KW-1185">Reference proteome</keyword>
<keyword id="KW-0964">Secreted</keyword>
<keyword id="KW-0732">Signal</keyword>
<dbReference type="EC" id="3.4.16.5" evidence="1"/>
<dbReference type="EMBL" id="ABSU01000005">
    <property type="protein sequence ID" value="EFE34598.1"/>
    <property type="molecule type" value="Genomic_DNA"/>
</dbReference>
<dbReference type="RefSeq" id="XP_003015238.1">
    <property type="nucleotide sequence ID" value="XM_003015192.1"/>
</dbReference>
<dbReference type="SMR" id="D4AQ54"/>
<dbReference type="ESTHER" id="artbc-scpc">
    <property type="family name" value="Carboxypeptidase_S10"/>
</dbReference>
<dbReference type="MEROPS" id="S10.016"/>
<dbReference type="GeneID" id="9520962"/>
<dbReference type="KEGG" id="abe:ARB_06361"/>
<dbReference type="eggNOG" id="KOG1282">
    <property type="taxonomic scope" value="Eukaryota"/>
</dbReference>
<dbReference type="HOGENOM" id="CLU_008523_10_3_1"/>
<dbReference type="OMA" id="FDIAQCH"/>
<dbReference type="OrthoDB" id="443318at2759"/>
<dbReference type="Proteomes" id="UP000008866">
    <property type="component" value="Unassembled WGS sequence"/>
</dbReference>
<dbReference type="GO" id="GO:0005576">
    <property type="term" value="C:extracellular region"/>
    <property type="evidence" value="ECO:0007669"/>
    <property type="project" value="UniProtKB-SubCell"/>
</dbReference>
<dbReference type="GO" id="GO:0000324">
    <property type="term" value="C:fungal-type vacuole"/>
    <property type="evidence" value="ECO:0007669"/>
    <property type="project" value="TreeGrafter"/>
</dbReference>
<dbReference type="GO" id="GO:0004185">
    <property type="term" value="F:serine-type carboxypeptidase activity"/>
    <property type="evidence" value="ECO:0007669"/>
    <property type="project" value="UniProtKB-EC"/>
</dbReference>
<dbReference type="GO" id="GO:0006508">
    <property type="term" value="P:proteolysis"/>
    <property type="evidence" value="ECO:0007669"/>
    <property type="project" value="UniProtKB-KW"/>
</dbReference>
<dbReference type="Gene3D" id="3.40.50.1820">
    <property type="entry name" value="alpha/beta hydrolase"/>
    <property type="match status" value="1"/>
</dbReference>
<dbReference type="InterPro" id="IPR029058">
    <property type="entry name" value="AB_hydrolase_fold"/>
</dbReference>
<dbReference type="InterPro" id="IPR001563">
    <property type="entry name" value="Peptidase_S10"/>
</dbReference>
<dbReference type="PANTHER" id="PTHR11802:SF189">
    <property type="entry name" value="CARBOXYPEPTIDASE"/>
    <property type="match status" value="1"/>
</dbReference>
<dbReference type="PANTHER" id="PTHR11802">
    <property type="entry name" value="SERINE PROTEASE FAMILY S10 SERINE CARBOXYPEPTIDASE"/>
    <property type="match status" value="1"/>
</dbReference>
<dbReference type="Pfam" id="PF00450">
    <property type="entry name" value="Peptidase_S10"/>
    <property type="match status" value="1"/>
</dbReference>
<dbReference type="PRINTS" id="PR00724">
    <property type="entry name" value="CRBOXYPTASEC"/>
</dbReference>
<dbReference type="SUPFAM" id="SSF53474">
    <property type="entry name" value="alpha/beta-Hydrolases"/>
    <property type="match status" value="1"/>
</dbReference>
<dbReference type="PROSITE" id="PS00131">
    <property type="entry name" value="CARBOXYPEPT_SER_SER"/>
    <property type="match status" value="1"/>
</dbReference>
<proteinExistence type="evidence at protein level"/>
<comment type="function">
    <text evidence="1">Involved in degradation of small peptides.</text>
</comment>
<comment type="catalytic activity">
    <reaction evidence="1">
        <text>Release of a C-terminal amino acid with broad specificity.</text>
        <dbReference type="EC" id="3.4.16.5"/>
    </reaction>
</comment>
<comment type="subcellular location">
    <subcellularLocation>
        <location evidence="5">Secreted</location>
    </subcellularLocation>
</comment>
<comment type="similarity">
    <text evidence="6">Belongs to the peptidase S10 family.</text>
</comment>
<sequence length="629" mass="69708">MLITWLLDVLLLAPPVAAGYPPKPKNLITIESKALPGATITYKEVPKGVCGNVRSYSGYINFPPNSMREAPQDFPVHIYFWYFESQVKPETDPLAIYINGGPGAGSMVGVFVESGPCRMSEDAQSTVLNEHSWNKEANLLYIDQPVQTGFSYDVLTNATFDFKTNILSPEGPDHDPSKDGTLLAGTFGSGDPSKTANTTLNAARHMWNIVQVWSQDFSPYADNRENDKISLWSESYGGRYAPGFMAYFLQQNNRIKAGLLTGSVLHLDTVGIINGCVDLISQQKSNIDFPYNKNTYGIQAIDDAGYDKAMHAYGKRGGCLDQILECHALAKRYDPNAYGHVDEVNYVCERANSYCNTEVDGIYVDGAKRGLFDIAQCHLDPFPSNSFLGYLAKTEVQEALGVPANHTDPSYTVEHVFNVTGDYVRSDRGGHLLDIANLLDARVKVAMVYGDRDFICNWVGAENVSLSVDYKDAKNFRRAGYADVYTDDSGVPKAQVRQHGLFSFTRVYQAGHMMLAYQPQVGYEIFRRAMFNMDIATGTVTDDIEFYSTQGEVNSTHAEPPLPTVPPTCNFWGMAMSCAKNQIEAIQKGEASIVNNIIVSPTQARGECPTPQPTRKSWFYNNEQQSFII</sequence>
<feature type="signal peptide" evidence="3">
    <location>
        <begin position="1"/>
        <end position="18"/>
    </location>
</feature>
<feature type="chain" id="PRO_5003053399" description="Carboxypeptidase Y homolog ARB_06361">
    <location>
        <begin position="19"/>
        <end position="629"/>
    </location>
</feature>
<feature type="active site" evidence="1">
    <location>
        <position position="235"/>
    </location>
</feature>
<feature type="active site" evidence="2">
    <location>
        <position position="453"/>
    </location>
</feature>
<feature type="binding site" evidence="1">
    <location>
        <position position="456"/>
    </location>
    <ligand>
        <name>substrate</name>
    </ligand>
</feature>
<feature type="glycosylation site" description="N-linked (GlcNAc...) asparagine" evidence="4">
    <location>
        <position position="157"/>
    </location>
</feature>
<feature type="glycosylation site" description="N-linked (GlcNAc...) asparagine" evidence="4">
    <location>
        <position position="197"/>
    </location>
</feature>
<feature type="glycosylation site" description="N-linked (GlcNAc...) asparagine" evidence="4">
    <location>
        <position position="405"/>
    </location>
</feature>
<feature type="glycosylation site" description="N-linked (GlcNAc...) asparagine" evidence="4">
    <location>
        <position position="418"/>
    </location>
</feature>
<feature type="glycosylation site" description="N-linked (GlcNAc...) asparagine" evidence="4">
    <location>
        <position position="463"/>
    </location>
</feature>
<feature type="glycosylation site" description="N-linked (GlcNAc...) asparagine" evidence="4">
    <location>
        <position position="554"/>
    </location>
</feature>
<feature type="disulfide bond" evidence="1">
    <location>
        <begin position="326"/>
        <end position="355"/>
    </location>
</feature>
<evidence type="ECO:0000250" key="1">
    <source>
        <dbReference type="UniProtKB" id="P00729"/>
    </source>
</evidence>
<evidence type="ECO:0000250" key="2">
    <source>
        <dbReference type="UniProtKB" id="P08819"/>
    </source>
</evidence>
<evidence type="ECO:0000255" key="3"/>
<evidence type="ECO:0000255" key="4">
    <source>
        <dbReference type="PROSITE-ProRule" id="PRU00498"/>
    </source>
</evidence>
<evidence type="ECO:0000269" key="5">
    <source>
    </source>
</evidence>
<evidence type="ECO:0000305" key="6"/>
<gene>
    <name type="ORF">ARB_06361</name>
</gene>